<comment type="function">
    <text evidence="2">Involved in 1,2-propanediol (1,2-PD) utilization within the bacterial microcompartment (BMC) dedicated to 1,2-PD degradation by catalyzing the conversion of propanoyl-CoA to propanoyl-phosphate. Required for optimal growth on 1,2-PD. CoA is regenerated within the BMC (for use by PduP) via this enzyme, although there must also be cofactor transport across the BMC. Directly targeted to the BMC.</text>
</comment>
<comment type="function">
    <text evidence="3">Expression of a cosmid containing the full 21-gene pdu operon in E.coli allows E.coli to grow on 1,2-propanediol (1,2-PD) with the appearance of bacterial microcompartments (BMC) in its cytoplasm.</text>
</comment>
<comment type="function">
    <text evidence="5">The 1,2-PD-specific bacterial microcompartment (BMC) concentrates low levels of 1,2-PD catabolic enzymes, concentrates volatile reaction intermediates thus enhancing pathway flux and keeps the level of toxic, mutagenic propionaldehyde low.</text>
</comment>
<comment type="catalytic activity">
    <reaction evidence="2">
        <text>propanoyl-CoA + phosphate = propanoyl phosphate + CoA</text>
        <dbReference type="Rhea" id="RHEA:28046"/>
        <dbReference type="ChEBI" id="CHEBI:43474"/>
        <dbReference type="ChEBI" id="CHEBI:57287"/>
        <dbReference type="ChEBI" id="CHEBI:57392"/>
        <dbReference type="ChEBI" id="CHEBI:58933"/>
        <dbReference type="EC" id="2.3.1.222"/>
    </reaction>
</comment>
<comment type="cofactor">
    <cofactor evidence="1">
        <name>Zn(2+)</name>
        <dbReference type="ChEBI" id="CHEBI:29105"/>
    </cofactor>
    <text evidence="1">There are 2 Zn(2+) ions per monomer; Zn(2+) and CoA bind inbetween the 2 domains in each monomer.</text>
</comment>
<comment type="pathway">
    <text evidence="3">Polyol metabolism; 1,2-propanediol degradation.</text>
</comment>
<comment type="subcellular location">
    <subcellularLocation>
        <location evidence="2">Bacterial microcompartment</location>
    </subcellularLocation>
</comment>
<comment type="domain">
    <text evidence="1">Formed by 2 beta-barrels, each is capped on both ends by short alpha-helices.</text>
</comment>
<comment type="similarity">
    <text evidence="5">Belongs to the PduL family.</text>
</comment>
<protein>
    <recommendedName>
        <fullName>Phosphate propanoyltransferase</fullName>
        <ecNumber evidence="2">2.3.1.222</ecNumber>
    </recommendedName>
    <alternativeName>
        <fullName>Phosphate acyltransferase PduL</fullName>
    </alternativeName>
    <alternativeName>
        <fullName>Phosphotransacylase PduL</fullName>
        <shortName>PTAC</shortName>
    </alternativeName>
    <alternativeName>
        <fullName>Propanediol utilization protein PduL</fullName>
    </alternativeName>
</protein>
<gene>
    <name evidence="4" type="primary">pduL</name>
</gene>
<sequence>MDKQQLETTVTKVLDEMRERPIPLGISNRHIHLCAEDYDRLFPNHPISEKKELLQPGQYAADQTVTLVGPKGQLKNVRLLGPLRSTSQVEISRTDARTLGIAAPLRMSGSIEGTPGVRLISPFAELDLASGVIVAQRHIHMSPLDALILRVSHGDKVSVAINGDERRLIFDNVAVRVSPDMRLEMHIDTDEANAAGADNPQAFATLVSPR</sequence>
<feature type="chain" id="PRO_0000454243" description="Phosphate propanoyltransferase">
    <location>
        <begin position="1"/>
        <end position="210"/>
    </location>
</feature>
<feature type="binding site" evidence="1">
    <location>
        <begin position="26"/>
        <end position="28"/>
    </location>
    <ligand>
        <name>CoA</name>
        <dbReference type="ChEBI" id="CHEBI:57287"/>
    </ligand>
</feature>
<feature type="binding site" evidence="1">
    <location>
        <position position="30"/>
    </location>
    <ligand>
        <name>Zn(2+)</name>
        <dbReference type="ChEBI" id="CHEBI:29105"/>
        <label>1</label>
    </ligand>
</feature>
<feature type="binding site" evidence="1">
    <location>
        <position position="32"/>
    </location>
    <ligand>
        <name>Zn(2+)</name>
        <dbReference type="ChEBI" id="CHEBI:29105"/>
        <label>1</label>
    </ligand>
</feature>
<feature type="binding site" evidence="1">
    <location>
        <position position="71"/>
    </location>
    <ligand>
        <name>CoA</name>
        <dbReference type="ChEBI" id="CHEBI:57287"/>
    </ligand>
</feature>
<feature type="binding site" evidence="1">
    <location>
        <position position="78"/>
    </location>
    <ligand>
        <name>CoA</name>
        <dbReference type="ChEBI" id="CHEBI:57287"/>
    </ligand>
</feature>
<feature type="binding site" evidence="1">
    <location>
        <position position="84"/>
    </location>
    <ligand>
        <name>phosphate</name>
        <dbReference type="ChEBI" id="CHEBI:43474"/>
    </ligand>
</feature>
<feature type="binding site" evidence="1">
    <location>
        <position position="90"/>
    </location>
    <ligand>
        <name>Zn(2+)</name>
        <dbReference type="ChEBI" id="CHEBI:29105"/>
        <label>1</label>
    </ligand>
</feature>
<feature type="binding site" evidence="1">
    <location>
        <position position="138"/>
    </location>
    <ligand>
        <name>Zn(2+)</name>
        <dbReference type="ChEBI" id="CHEBI:29105"/>
        <label>2</label>
    </ligand>
</feature>
<feature type="binding site" evidence="1">
    <location>
        <position position="140"/>
    </location>
    <ligand>
        <name>Zn(2+)</name>
        <dbReference type="ChEBI" id="CHEBI:29105"/>
        <label>2</label>
    </ligand>
</feature>
<feature type="binding site" evidence="1">
    <location>
        <position position="186"/>
    </location>
    <ligand>
        <name>Zn(2+)</name>
        <dbReference type="ChEBI" id="CHEBI:29105"/>
        <label>2</label>
    </ligand>
</feature>
<feature type="binding site" evidence="1">
    <location>
        <position position="193"/>
    </location>
    <ligand>
        <name>CoA</name>
        <dbReference type="ChEBI" id="CHEBI:57287"/>
    </ligand>
</feature>
<evidence type="ECO:0000250" key="1">
    <source>
        <dbReference type="UniProtKB" id="Q21A54"/>
    </source>
</evidence>
<evidence type="ECO:0000250" key="2">
    <source>
        <dbReference type="UniProtKB" id="Q9XDN5"/>
    </source>
</evidence>
<evidence type="ECO:0000269" key="3">
    <source>
    </source>
</evidence>
<evidence type="ECO:0000303" key="4">
    <source>
    </source>
</evidence>
<evidence type="ECO:0000305" key="5"/>
<organism>
    <name type="scientific">Citrobacter freundii</name>
    <dbReference type="NCBI Taxonomy" id="546"/>
    <lineage>
        <taxon>Bacteria</taxon>
        <taxon>Pseudomonadati</taxon>
        <taxon>Pseudomonadota</taxon>
        <taxon>Gammaproteobacteria</taxon>
        <taxon>Enterobacterales</taxon>
        <taxon>Enterobacteriaceae</taxon>
        <taxon>Citrobacter</taxon>
        <taxon>Citrobacter freundii complex</taxon>
    </lineage>
</organism>
<name>PDUL_CITFR</name>
<keyword id="KW-0012">Acyltransferase</keyword>
<keyword id="KW-1283">Bacterial microcompartment</keyword>
<keyword id="KW-0479">Metal-binding</keyword>
<keyword id="KW-0808">Transferase</keyword>
<keyword id="KW-0862">Zinc</keyword>
<proteinExistence type="inferred from homology"/>
<reference key="1">
    <citation type="journal article" date="2008" name="J. Biol. Chem.">
        <title>Biochemical and Structural Insights into Bacterial Organelle Form and Biogenesis.</title>
        <authorList>
            <person name="Parsons J.B."/>
            <person name="Dinesh S.D."/>
            <person name="Deery E."/>
            <person name="Leech H.K."/>
            <person name="Brindley A.A."/>
            <person name="Heldt D."/>
            <person name="Frank S."/>
            <person name="Smales C.M."/>
            <person name="Lunsdorf H."/>
            <person name="Rambach A."/>
            <person name="Gass M.H."/>
            <person name="Bleloch A."/>
            <person name="McClean K.J."/>
            <person name="Munro A.W."/>
            <person name="Rigby S.E.J."/>
            <person name="Warren M.J."/>
            <person name="Prentice M.B."/>
        </authorList>
    </citation>
    <scope>NUCLEOTIDE SEQUENCE [GENOMIC DNA]</scope>
    <scope>FUNCTION</scope>
    <scope>PATHWAY</scope>
</reference>
<accession>B1VB71</accession>
<dbReference type="EC" id="2.3.1.222" evidence="2"/>
<dbReference type="EMBL" id="AM498294">
    <property type="protein sequence ID" value="CAM57292.1"/>
    <property type="molecule type" value="Genomic_DNA"/>
</dbReference>
<dbReference type="SMR" id="B1VB71"/>
<dbReference type="UniPathway" id="UPA00621"/>
<dbReference type="GO" id="GO:0031469">
    <property type="term" value="C:bacterial microcompartment"/>
    <property type="evidence" value="ECO:0007669"/>
    <property type="project" value="UniProtKB-SubCell"/>
</dbReference>
<dbReference type="GO" id="GO:0016747">
    <property type="term" value="F:acyltransferase activity, transferring groups other than amino-acyl groups"/>
    <property type="evidence" value="ECO:0007669"/>
    <property type="project" value="InterPro"/>
</dbReference>
<dbReference type="GO" id="GO:0046872">
    <property type="term" value="F:metal ion binding"/>
    <property type="evidence" value="ECO:0007669"/>
    <property type="project" value="UniProtKB-KW"/>
</dbReference>
<dbReference type="GO" id="GO:0051144">
    <property type="term" value="P:propanediol catabolic process"/>
    <property type="evidence" value="ECO:0007669"/>
    <property type="project" value="UniProtKB-UniPathway"/>
</dbReference>
<dbReference type="InterPro" id="IPR008300">
    <property type="entry name" value="PTAC"/>
</dbReference>
<dbReference type="NCBIfam" id="NF011652">
    <property type="entry name" value="PRK15070.1"/>
    <property type="match status" value="1"/>
</dbReference>
<dbReference type="PANTHER" id="PTHR39453">
    <property type="entry name" value="PHOSPHATE PROPANOYLTRANSFERASE"/>
    <property type="match status" value="1"/>
</dbReference>
<dbReference type="PANTHER" id="PTHR39453:SF1">
    <property type="entry name" value="PHOSPHATE PROPANOYLTRANSFERASE"/>
    <property type="match status" value="1"/>
</dbReference>
<dbReference type="Pfam" id="PF06130">
    <property type="entry name" value="PTAC"/>
    <property type="match status" value="1"/>
</dbReference>
<dbReference type="PIRSF" id="PIRSF010130">
    <property type="entry name" value="PduL"/>
    <property type="match status" value="1"/>
</dbReference>